<dbReference type="EMBL" id="DP000018">
    <property type="protein sequence ID" value="ABB89777.1"/>
    <property type="molecule type" value="Genomic_DNA"/>
</dbReference>
<dbReference type="SMR" id="Q2QLD1"/>
<dbReference type="GO" id="GO:0030863">
    <property type="term" value="C:cortical cytoskeleton"/>
    <property type="evidence" value="ECO:0007669"/>
    <property type="project" value="TreeGrafter"/>
</dbReference>
<dbReference type="GO" id="GO:0008290">
    <property type="term" value="C:F-actin capping protein complex"/>
    <property type="evidence" value="ECO:0007669"/>
    <property type="project" value="InterPro"/>
</dbReference>
<dbReference type="GO" id="GO:0051015">
    <property type="term" value="F:actin filament binding"/>
    <property type="evidence" value="ECO:0007669"/>
    <property type="project" value="TreeGrafter"/>
</dbReference>
<dbReference type="GO" id="GO:0030036">
    <property type="term" value="P:actin cytoskeleton organization"/>
    <property type="evidence" value="ECO:0007669"/>
    <property type="project" value="TreeGrafter"/>
</dbReference>
<dbReference type="GO" id="GO:0051016">
    <property type="term" value="P:barbed-end actin filament capping"/>
    <property type="evidence" value="ECO:0007669"/>
    <property type="project" value="InterPro"/>
</dbReference>
<dbReference type="FunFam" id="3.30.1140.60:FF:000001">
    <property type="entry name" value="F-actin-capping protein subunit alpha"/>
    <property type="match status" value="1"/>
</dbReference>
<dbReference type="FunFam" id="3.90.1150.210:FF:000002">
    <property type="entry name" value="F-actin-capping protein subunit alpha"/>
    <property type="match status" value="1"/>
</dbReference>
<dbReference type="Gene3D" id="3.30.1140.60">
    <property type="entry name" value="F-actin capping protein, alpha subunit"/>
    <property type="match status" value="1"/>
</dbReference>
<dbReference type="Gene3D" id="3.90.1150.210">
    <property type="entry name" value="F-actin capping protein, beta subunit"/>
    <property type="match status" value="1"/>
</dbReference>
<dbReference type="InterPro" id="IPR002189">
    <property type="entry name" value="CapZ_alpha"/>
</dbReference>
<dbReference type="InterPro" id="IPR037282">
    <property type="entry name" value="CapZ_alpha/beta"/>
</dbReference>
<dbReference type="InterPro" id="IPR042276">
    <property type="entry name" value="CapZ_alpha/beta_2"/>
</dbReference>
<dbReference type="InterPro" id="IPR042489">
    <property type="entry name" value="CapZ_alpha_1"/>
</dbReference>
<dbReference type="InterPro" id="IPR017865">
    <property type="entry name" value="F-actin_cap_asu_CS"/>
</dbReference>
<dbReference type="PANTHER" id="PTHR10653">
    <property type="entry name" value="F-ACTIN-CAPPING PROTEIN SUBUNIT ALPHA"/>
    <property type="match status" value="1"/>
</dbReference>
<dbReference type="PANTHER" id="PTHR10653:SF2">
    <property type="entry name" value="F-ACTIN-CAPPING PROTEIN SUBUNIT ALPHA-2"/>
    <property type="match status" value="1"/>
</dbReference>
<dbReference type="Pfam" id="PF01267">
    <property type="entry name" value="F-actin_cap_A"/>
    <property type="match status" value="1"/>
</dbReference>
<dbReference type="PRINTS" id="PR00191">
    <property type="entry name" value="FACTINCAPA"/>
</dbReference>
<dbReference type="SUPFAM" id="SSF90096">
    <property type="entry name" value="Subunits of heterodimeric actin filament capping protein Capz"/>
    <property type="match status" value="1"/>
</dbReference>
<dbReference type="PROSITE" id="PS00748">
    <property type="entry name" value="F_ACTIN_CAPPING_A_1"/>
    <property type="match status" value="1"/>
</dbReference>
<dbReference type="PROSITE" id="PS00749">
    <property type="entry name" value="F_ACTIN_CAPPING_A_2"/>
    <property type="match status" value="1"/>
</dbReference>
<feature type="initiator methionine" description="Removed" evidence="2">
    <location>
        <position position="1"/>
    </location>
</feature>
<feature type="chain" id="PRO_0000226312" description="F-actin-capping protein subunit alpha-2">
    <location>
        <begin position="2"/>
        <end position="286"/>
    </location>
</feature>
<feature type="modified residue" description="N-acetylalanine" evidence="2">
    <location>
        <position position="2"/>
    </location>
</feature>
<feature type="modified residue" description="Phosphoserine" evidence="2">
    <location>
        <position position="9"/>
    </location>
</feature>
<keyword id="KW-0007">Acetylation</keyword>
<keyword id="KW-0117">Actin capping</keyword>
<keyword id="KW-0009">Actin-binding</keyword>
<keyword id="KW-0597">Phosphoprotein</keyword>
<gene>
    <name type="primary">CAPZA2</name>
</gene>
<sequence length="286" mass="32981">MADLEEQLSDEEKVRIAAKFIIHAPPGEFNEVFNDVRLLLNNDNLLREGAAHAFAQYNLDQFTPVKIEGYEDQVLITEHGDVGNGKFLDPKNRICFKFDHLRKEATDPRPYEAENAIESWRTSVETALRAYVKEHYPNGVCTVYGKKIDGQQTIIACIESHQFQAKNFWNGRWRSEWKFTITPSTAQVVGILKIQVHYYEDGNVQLVSHKDIQDSLTVSNEVQTAKEFIKIVETAENEYQTAISENYQTMSDTTFKALRRQLPVTRTKIDWNKILSYKIGKEMQNA</sequence>
<protein>
    <recommendedName>
        <fullName>F-actin-capping protein subunit alpha-2</fullName>
    </recommendedName>
    <alternativeName>
        <fullName>CapZ alpha-2</fullName>
    </alternativeName>
</protein>
<evidence type="ECO:0000250" key="1"/>
<evidence type="ECO:0000250" key="2">
    <source>
        <dbReference type="UniProtKB" id="P47755"/>
    </source>
</evidence>
<evidence type="ECO:0000305" key="3"/>
<name>CAZA2_CARPS</name>
<accession>Q2QLD1</accession>
<comment type="function">
    <text evidence="1">F-actin-capping proteins bind in a Ca(2+)-independent manner to the fast growing ends of actin filaments (barbed end) thereby blocking the exchange of subunits at these ends. Unlike other capping proteins (such as gelsolin and severin), these proteins do not sever actin filaments (By similarity).</text>
</comment>
<comment type="subunit">
    <text evidence="1">Component of the F-actin capping complex, composed of a heterodimer of an alpha and a beta subunit. Component of the WASH complex, composed of F-actin-capping protein subunit alpha (CAPZA1, CAPZA2 or CAPZA3), F-actin-capping protein subunit beta (CAPZB), WASHC1, WASHC2, WASHC3, WASHC4 and WASHC5. Interacts with RCSD1/CAPZIP (By similarity).</text>
</comment>
<comment type="similarity">
    <text evidence="3">Belongs to the F-actin-capping protein alpha subunit family.</text>
</comment>
<reference key="1">
    <citation type="submission" date="2005-11" db="EMBL/GenBank/DDBJ databases">
        <title>NISC comparative sequencing initiative.</title>
        <authorList>
            <person name="Antonellis A."/>
            <person name="Ayele K."/>
            <person name="Benjamin B."/>
            <person name="Blakesley R.W."/>
            <person name="Boakye A."/>
            <person name="Bouffard G.G."/>
            <person name="Brinkley C."/>
            <person name="Brooks S."/>
            <person name="Chu G."/>
            <person name="Coleman H."/>
            <person name="Engle J."/>
            <person name="Gestole M."/>
            <person name="Greene A."/>
            <person name="Guan X."/>
            <person name="Gupta J."/>
            <person name="Haghighi P."/>
            <person name="Han J."/>
            <person name="Hansen N."/>
            <person name="Ho S.-L."/>
            <person name="Hu P."/>
            <person name="Hunter G."/>
            <person name="Hurle B."/>
            <person name="Idol J.R."/>
            <person name="Kwong P."/>
            <person name="Laric P."/>
            <person name="Larson S."/>
            <person name="Lee-Lin S.-Q."/>
            <person name="Legaspi R."/>
            <person name="Madden M."/>
            <person name="Maduro Q.L."/>
            <person name="Maduro V.B."/>
            <person name="Margulies E.H."/>
            <person name="Masiello C."/>
            <person name="Maskeri B."/>
            <person name="McDowell J."/>
            <person name="Mojidi H.A."/>
            <person name="Mullikin J.C."/>
            <person name="Oestreicher J.S."/>
            <person name="Park M."/>
            <person name="Portnoy M.E."/>
            <person name="Prasad A."/>
            <person name="Puri O."/>
            <person name="Reddix-Dugue N."/>
            <person name="Schandler K."/>
            <person name="Schueler M.G."/>
            <person name="Sison C."/>
            <person name="Stantripop S."/>
            <person name="Stephen E."/>
            <person name="Taye A."/>
            <person name="Thomas J.W."/>
            <person name="Thomas P.J."/>
            <person name="Tsipouri V."/>
            <person name="Ung L."/>
            <person name="Vogt J.L."/>
            <person name="Wetherby K.D."/>
            <person name="Young A."/>
            <person name="Green E.D."/>
        </authorList>
    </citation>
    <scope>NUCLEOTIDE SEQUENCE [LARGE SCALE GENOMIC DNA]</scope>
</reference>
<proteinExistence type="inferred from homology"/>
<organism>
    <name type="scientific">Carollia perspicillata</name>
    <name type="common">Seba's short-tailed bat</name>
    <dbReference type="NCBI Taxonomy" id="40233"/>
    <lineage>
        <taxon>Eukaryota</taxon>
        <taxon>Metazoa</taxon>
        <taxon>Chordata</taxon>
        <taxon>Craniata</taxon>
        <taxon>Vertebrata</taxon>
        <taxon>Euteleostomi</taxon>
        <taxon>Mammalia</taxon>
        <taxon>Eutheria</taxon>
        <taxon>Laurasiatheria</taxon>
        <taxon>Chiroptera</taxon>
        <taxon>Yangochiroptera</taxon>
        <taxon>Phyllostomidae</taxon>
        <taxon>Carolliinae</taxon>
        <taxon>Carollia</taxon>
    </lineage>
</organism>